<dbReference type="EC" id="4.2.1.-" evidence="1"/>
<dbReference type="EMBL" id="CP000560">
    <property type="protein sequence ID" value="ABS72829.1"/>
    <property type="molecule type" value="Genomic_DNA"/>
</dbReference>
<dbReference type="SMR" id="A7Z1F3"/>
<dbReference type="KEGG" id="bay:RBAM_004300"/>
<dbReference type="HOGENOM" id="CLU_059759_0_0_9"/>
<dbReference type="Proteomes" id="UP000001120">
    <property type="component" value="Chromosome"/>
</dbReference>
<dbReference type="GO" id="GO:0016829">
    <property type="term" value="F:lyase activity"/>
    <property type="evidence" value="ECO:0007669"/>
    <property type="project" value="UniProtKB-KW"/>
</dbReference>
<dbReference type="FunFam" id="3.30.2040.10:FF:000001">
    <property type="entry name" value="D-glutamate cyclase, mitochondrial"/>
    <property type="match status" value="1"/>
</dbReference>
<dbReference type="Gene3D" id="3.40.1640.10">
    <property type="entry name" value="PSTPO5379-like"/>
    <property type="match status" value="1"/>
</dbReference>
<dbReference type="Gene3D" id="3.30.2040.10">
    <property type="entry name" value="PSTPO5379-like domain"/>
    <property type="match status" value="1"/>
</dbReference>
<dbReference type="HAMAP" id="MF_01830">
    <property type="entry name" value="Hydro_lyase"/>
    <property type="match status" value="1"/>
</dbReference>
<dbReference type="InterPro" id="IPR009906">
    <property type="entry name" value="D-Glu_cyclase"/>
</dbReference>
<dbReference type="InterPro" id="IPR038021">
    <property type="entry name" value="Putative_hydro-lyase"/>
</dbReference>
<dbReference type="InterPro" id="IPR016938">
    <property type="entry name" value="UPF0317"/>
</dbReference>
<dbReference type="NCBIfam" id="NF003969">
    <property type="entry name" value="PRK05463.1"/>
    <property type="match status" value="1"/>
</dbReference>
<dbReference type="PANTHER" id="PTHR32022">
    <property type="entry name" value="D-GLUTAMATE CYCLASE, MITOCHONDRIAL"/>
    <property type="match status" value="1"/>
</dbReference>
<dbReference type="PANTHER" id="PTHR32022:SF10">
    <property type="entry name" value="D-GLUTAMATE CYCLASE, MITOCHONDRIAL"/>
    <property type="match status" value="1"/>
</dbReference>
<dbReference type="Pfam" id="PF07286">
    <property type="entry name" value="D-Glu_cyclase"/>
    <property type="match status" value="1"/>
</dbReference>
<dbReference type="PIRSF" id="PIRSF029755">
    <property type="entry name" value="UCP029755"/>
    <property type="match status" value="1"/>
</dbReference>
<dbReference type="SUPFAM" id="SSF160920">
    <property type="entry name" value="PSTPO5379-like"/>
    <property type="match status" value="1"/>
</dbReference>
<gene>
    <name type="ordered locus">RBAM_004300</name>
</gene>
<protein>
    <recommendedName>
        <fullName evidence="1">Putative hydro-lyase RBAM_004300</fullName>
        <ecNumber evidence="1">4.2.1.-</ecNumber>
    </recommendedName>
</protein>
<sequence length="264" mass="28899">MKNHMSDMSPEEVRQLVRKGQMTGPTAGMAASYAQANLVVLQKDLAFDFLLFCQRNQKPCPVLDVTDAGSPVPAIAAPGADIRTDFPKYRIYRHGVLTEEVTDITPYWKDDDVGFLIGCSFSFEQALINQHIPIRHIDEGVNVPMYKTDIDCVPAGPFSGKMVVSMRPIPERLAVRAAQVTSRFPAVHGAPVRIGNPQSIGISDLHQPDFGDAVTVREGEVPVFWACGVTPQAVIMEAKPDIVITHSPGHMLITDIRNESLAVL</sequence>
<reference key="1">
    <citation type="journal article" date="2007" name="Nat. Biotechnol.">
        <title>Comparative analysis of the complete genome sequence of the plant growth-promoting bacterium Bacillus amyloliquefaciens FZB42.</title>
        <authorList>
            <person name="Chen X.H."/>
            <person name="Koumoutsi A."/>
            <person name="Scholz R."/>
            <person name="Eisenreich A."/>
            <person name="Schneider K."/>
            <person name="Heinemeyer I."/>
            <person name="Morgenstern B."/>
            <person name="Voss B."/>
            <person name="Hess W.R."/>
            <person name="Reva O."/>
            <person name="Junge H."/>
            <person name="Voigt B."/>
            <person name="Jungblut P.R."/>
            <person name="Vater J."/>
            <person name="Suessmuth R."/>
            <person name="Liesegang H."/>
            <person name="Strittmatter A."/>
            <person name="Gottschalk G."/>
            <person name="Borriss R."/>
        </authorList>
    </citation>
    <scope>NUCLEOTIDE SEQUENCE [LARGE SCALE GENOMIC DNA]</scope>
    <source>
        <strain>DSM 23117 / BGSC 10A6 / LMG 26770 / FZB42</strain>
    </source>
</reference>
<organism>
    <name type="scientific">Bacillus velezensis (strain DSM 23117 / BGSC 10A6 / LMG 26770 / FZB42)</name>
    <name type="common">Bacillus amyloliquefaciens subsp. plantarum</name>
    <dbReference type="NCBI Taxonomy" id="326423"/>
    <lineage>
        <taxon>Bacteria</taxon>
        <taxon>Bacillati</taxon>
        <taxon>Bacillota</taxon>
        <taxon>Bacilli</taxon>
        <taxon>Bacillales</taxon>
        <taxon>Bacillaceae</taxon>
        <taxon>Bacillus</taxon>
        <taxon>Bacillus amyloliquefaciens group</taxon>
    </lineage>
</organism>
<accession>A7Z1F3</accession>
<keyword id="KW-0456">Lyase</keyword>
<comment type="similarity">
    <text evidence="1">Belongs to the D-glutamate cyclase family.</text>
</comment>
<feature type="chain" id="PRO_0000379818" description="Putative hydro-lyase RBAM_004300">
    <location>
        <begin position="1"/>
        <end position="264"/>
    </location>
</feature>
<name>Y430_BACVZ</name>
<proteinExistence type="inferred from homology"/>
<evidence type="ECO:0000255" key="1">
    <source>
        <dbReference type="HAMAP-Rule" id="MF_01830"/>
    </source>
</evidence>